<accession>O80695</accession>
<accession>B9DHU1</accession>
<accession>Q94AC7</accession>
<reference key="1">
    <citation type="journal article" date="2000" name="Nature">
        <title>Sequence and analysis of chromosome 1 of the plant Arabidopsis thaliana.</title>
        <authorList>
            <person name="Theologis A."/>
            <person name="Ecker J.R."/>
            <person name="Palm C.J."/>
            <person name="Federspiel N.A."/>
            <person name="Kaul S."/>
            <person name="White O."/>
            <person name="Alonso J."/>
            <person name="Altafi H."/>
            <person name="Araujo R."/>
            <person name="Bowman C.L."/>
            <person name="Brooks S.Y."/>
            <person name="Buehler E."/>
            <person name="Chan A."/>
            <person name="Chao Q."/>
            <person name="Chen H."/>
            <person name="Cheuk R.F."/>
            <person name="Chin C.W."/>
            <person name="Chung M.K."/>
            <person name="Conn L."/>
            <person name="Conway A.B."/>
            <person name="Conway A.R."/>
            <person name="Creasy T.H."/>
            <person name="Dewar K."/>
            <person name="Dunn P."/>
            <person name="Etgu P."/>
            <person name="Feldblyum T.V."/>
            <person name="Feng J.-D."/>
            <person name="Fong B."/>
            <person name="Fujii C.Y."/>
            <person name="Gill J.E."/>
            <person name="Goldsmith A.D."/>
            <person name="Haas B."/>
            <person name="Hansen N.F."/>
            <person name="Hughes B."/>
            <person name="Huizar L."/>
            <person name="Hunter J.L."/>
            <person name="Jenkins J."/>
            <person name="Johnson-Hopson C."/>
            <person name="Khan S."/>
            <person name="Khaykin E."/>
            <person name="Kim C.J."/>
            <person name="Koo H.L."/>
            <person name="Kremenetskaia I."/>
            <person name="Kurtz D.B."/>
            <person name="Kwan A."/>
            <person name="Lam B."/>
            <person name="Langin-Hooper S."/>
            <person name="Lee A."/>
            <person name="Lee J.M."/>
            <person name="Lenz C.A."/>
            <person name="Li J.H."/>
            <person name="Li Y.-P."/>
            <person name="Lin X."/>
            <person name="Liu S.X."/>
            <person name="Liu Z.A."/>
            <person name="Luros J.S."/>
            <person name="Maiti R."/>
            <person name="Marziali A."/>
            <person name="Militscher J."/>
            <person name="Miranda M."/>
            <person name="Nguyen M."/>
            <person name="Nierman W.C."/>
            <person name="Osborne B.I."/>
            <person name="Pai G."/>
            <person name="Peterson J."/>
            <person name="Pham P.K."/>
            <person name="Rizzo M."/>
            <person name="Rooney T."/>
            <person name="Rowley D."/>
            <person name="Sakano H."/>
            <person name="Salzberg S.L."/>
            <person name="Schwartz J.R."/>
            <person name="Shinn P."/>
            <person name="Southwick A.M."/>
            <person name="Sun H."/>
            <person name="Tallon L.J."/>
            <person name="Tambunga G."/>
            <person name="Toriumi M.J."/>
            <person name="Town C.D."/>
            <person name="Utterback T."/>
            <person name="Van Aken S."/>
            <person name="Vaysberg M."/>
            <person name="Vysotskaia V.S."/>
            <person name="Walker M."/>
            <person name="Wu D."/>
            <person name="Yu G."/>
            <person name="Fraser C.M."/>
            <person name="Venter J.C."/>
            <person name="Davis R.W."/>
        </authorList>
    </citation>
    <scope>NUCLEOTIDE SEQUENCE [LARGE SCALE GENOMIC DNA]</scope>
    <source>
        <strain>cv. Columbia</strain>
    </source>
</reference>
<reference key="2">
    <citation type="journal article" date="2017" name="Plant J.">
        <title>Araport11: a complete reannotation of the Arabidopsis thaliana reference genome.</title>
        <authorList>
            <person name="Cheng C.Y."/>
            <person name="Krishnakumar V."/>
            <person name="Chan A.P."/>
            <person name="Thibaud-Nissen F."/>
            <person name="Schobel S."/>
            <person name="Town C.D."/>
        </authorList>
    </citation>
    <scope>GENOME REANNOTATION</scope>
    <source>
        <strain>cv. Columbia</strain>
    </source>
</reference>
<reference key="3">
    <citation type="journal article" date="2003" name="Science">
        <title>Empirical analysis of transcriptional activity in the Arabidopsis genome.</title>
        <authorList>
            <person name="Yamada K."/>
            <person name="Lim J."/>
            <person name="Dale J.M."/>
            <person name="Chen H."/>
            <person name="Shinn P."/>
            <person name="Palm C.J."/>
            <person name="Southwick A.M."/>
            <person name="Wu H.C."/>
            <person name="Kim C.J."/>
            <person name="Nguyen M."/>
            <person name="Pham P.K."/>
            <person name="Cheuk R.F."/>
            <person name="Karlin-Newmann G."/>
            <person name="Liu S.X."/>
            <person name="Lam B."/>
            <person name="Sakano H."/>
            <person name="Wu T."/>
            <person name="Yu G."/>
            <person name="Miranda M."/>
            <person name="Quach H.L."/>
            <person name="Tripp M."/>
            <person name="Chang C.H."/>
            <person name="Lee J.M."/>
            <person name="Toriumi M.J."/>
            <person name="Chan M.M."/>
            <person name="Tang C.C."/>
            <person name="Onodera C.S."/>
            <person name="Deng J.M."/>
            <person name="Akiyama K."/>
            <person name="Ansari Y."/>
            <person name="Arakawa T."/>
            <person name="Banh J."/>
            <person name="Banno F."/>
            <person name="Bowser L."/>
            <person name="Brooks S.Y."/>
            <person name="Carninci P."/>
            <person name="Chao Q."/>
            <person name="Choy N."/>
            <person name="Enju A."/>
            <person name="Goldsmith A.D."/>
            <person name="Gurjal M."/>
            <person name="Hansen N.F."/>
            <person name="Hayashizaki Y."/>
            <person name="Johnson-Hopson C."/>
            <person name="Hsuan V.W."/>
            <person name="Iida K."/>
            <person name="Karnes M."/>
            <person name="Khan S."/>
            <person name="Koesema E."/>
            <person name="Ishida J."/>
            <person name="Jiang P.X."/>
            <person name="Jones T."/>
            <person name="Kawai J."/>
            <person name="Kamiya A."/>
            <person name="Meyers C."/>
            <person name="Nakajima M."/>
            <person name="Narusaka M."/>
            <person name="Seki M."/>
            <person name="Sakurai T."/>
            <person name="Satou M."/>
            <person name="Tamse R."/>
            <person name="Vaysberg M."/>
            <person name="Wallender E.K."/>
            <person name="Wong C."/>
            <person name="Yamamura Y."/>
            <person name="Yuan S."/>
            <person name="Shinozaki K."/>
            <person name="Davis R.W."/>
            <person name="Theologis A."/>
            <person name="Ecker J.R."/>
        </authorList>
    </citation>
    <scope>NUCLEOTIDE SEQUENCE [LARGE SCALE MRNA]</scope>
    <source>
        <strain>cv. Columbia</strain>
    </source>
</reference>
<reference key="4">
    <citation type="journal article" date="2009" name="DNA Res.">
        <title>Analysis of multiple occurrences of alternative splicing events in Arabidopsis thaliana using novel sequenced full-length cDNAs.</title>
        <authorList>
            <person name="Iida K."/>
            <person name="Fukami-Kobayashi K."/>
            <person name="Toyoda A."/>
            <person name="Sakaki Y."/>
            <person name="Kobayashi M."/>
            <person name="Seki M."/>
            <person name="Shinozaki K."/>
        </authorList>
    </citation>
    <scope>NUCLEOTIDE SEQUENCE [LARGE SCALE MRNA] OF 208-501</scope>
    <source>
        <strain>cv. Columbia</strain>
    </source>
</reference>
<reference key="5">
    <citation type="journal article" date="2002" name="J. Biol. Chem.">
        <title>Functional cloning and characterization of a plant efflux carrier for multidrug and heavy metal detoxification.</title>
        <authorList>
            <person name="Li L."/>
            <person name="He Z."/>
            <person name="Pandey G.K."/>
            <person name="Tsuchiya T."/>
            <person name="Luan S."/>
        </authorList>
    </citation>
    <scope>GENE FAMILY</scope>
    <scope>NOMENCLATURE</scope>
</reference>
<reference key="6">
    <citation type="journal article" date="2003" name="Eur. J. Biochem.">
        <title>The multidrug/oligosaccharidyl-lipid/polysaccharide (MOP) exporter superfamily.</title>
        <authorList>
            <person name="Hvorup R.N."/>
            <person name="Winnen B."/>
            <person name="Chang A.B."/>
            <person name="Jiang Y."/>
            <person name="Zhou X.F."/>
            <person name="Saier M.H. Jr."/>
        </authorList>
    </citation>
    <scope>GENE FAMILY</scope>
</reference>
<dbReference type="EMBL" id="AC004392">
    <property type="protein sequence ID" value="AAC28507.1"/>
    <property type="molecule type" value="Genomic_DNA"/>
</dbReference>
<dbReference type="EMBL" id="CP002684">
    <property type="protein sequence ID" value="AEE33899.1"/>
    <property type="molecule type" value="Genomic_DNA"/>
</dbReference>
<dbReference type="EMBL" id="AF325100">
    <property type="protein sequence ID" value="AAK17168.1"/>
    <property type="molecule type" value="mRNA"/>
</dbReference>
<dbReference type="EMBL" id="AY048279">
    <property type="protein sequence ID" value="AAK82541.1"/>
    <property type="molecule type" value="mRNA"/>
</dbReference>
<dbReference type="EMBL" id="AY057622">
    <property type="protein sequence ID" value="AAL14417.1"/>
    <property type="molecule type" value="mRNA"/>
</dbReference>
<dbReference type="EMBL" id="AK317647">
    <property type="protein sequence ID" value="BAH20308.1"/>
    <property type="molecule type" value="mRNA"/>
</dbReference>
<dbReference type="PIR" id="T02134">
    <property type="entry name" value="T02134"/>
</dbReference>
<dbReference type="RefSeq" id="NP_564787.1">
    <property type="nucleotide sequence ID" value="NM_104870.4"/>
</dbReference>
<dbReference type="SMR" id="O80695"/>
<dbReference type="FunCoup" id="O80695">
    <property type="interactions" value="286"/>
</dbReference>
<dbReference type="STRING" id="3702.O80695"/>
<dbReference type="PaxDb" id="3702-AT1G61890.1"/>
<dbReference type="ProteomicsDB" id="222184"/>
<dbReference type="EnsemblPlants" id="AT1G61890.1">
    <property type="protein sequence ID" value="AT1G61890.1"/>
    <property type="gene ID" value="AT1G61890"/>
</dbReference>
<dbReference type="GeneID" id="842485"/>
<dbReference type="Gramene" id="AT1G61890.1">
    <property type="protein sequence ID" value="AT1G61890.1"/>
    <property type="gene ID" value="AT1G61890"/>
</dbReference>
<dbReference type="KEGG" id="ath:AT1G61890"/>
<dbReference type="Araport" id="AT1G61890"/>
<dbReference type="TAIR" id="AT1G61890"/>
<dbReference type="eggNOG" id="KOG1347">
    <property type="taxonomic scope" value="Eukaryota"/>
</dbReference>
<dbReference type="HOGENOM" id="CLU_012893_1_4_1"/>
<dbReference type="InParanoid" id="O80695"/>
<dbReference type="OMA" id="CRETHTH"/>
<dbReference type="PRO" id="PR:O80695"/>
<dbReference type="Proteomes" id="UP000006548">
    <property type="component" value="Chromosome 1"/>
</dbReference>
<dbReference type="ExpressionAtlas" id="O80695">
    <property type="expression patterns" value="baseline and differential"/>
</dbReference>
<dbReference type="GO" id="GO:0016020">
    <property type="term" value="C:membrane"/>
    <property type="evidence" value="ECO:0007669"/>
    <property type="project" value="UniProtKB-SubCell"/>
</dbReference>
<dbReference type="GO" id="GO:0015297">
    <property type="term" value="F:antiporter activity"/>
    <property type="evidence" value="ECO:0007669"/>
    <property type="project" value="InterPro"/>
</dbReference>
<dbReference type="GO" id="GO:0042910">
    <property type="term" value="F:xenobiotic transmembrane transporter activity"/>
    <property type="evidence" value="ECO:0007669"/>
    <property type="project" value="InterPro"/>
</dbReference>
<dbReference type="GO" id="GO:1990961">
    <property type="term" value="P:xenobiotic detoxification by transmembrane export across the plasma membrane"/>
    <property type="evidence" value="ECO:0007669"/>
    <property type="project" value="InterPro"/>
</dbReference>
<dbReference type="CDD" id="cd13132">
    <property type="entry name" value="MATE_eukaryotic"/>
    <property type="match status" value="1"/>
</dbReference>
<dbReference type="InterPro" id="IPR045069">
    <property type="entry name" value="MATE_euk"/>
</dbReference>
<dbReference type="InterPro" id="IPR002528">
    <property type="entry name" value="MATE_fam"/>
</dbReference>
<dbReference type="NCBIfam" id="TIGR00797">
    <property type="entry name" value="matE"/>
    <property type="match status" value="1"/>
</dbReference>
<dbReference type="PANTHER" id="PTHR11206">
    <property type="entry name" value="MULTIDRUG RESISTANCE PROTEIN"/>
    <property type="match status" value="1"/>
</dbReference>
<dbReference type="Pfam" id="PF01554">
    <property type="entry name" value="MatE"/>
    <property type="match status" value="2"/>
</dbReference>
<evidence type="ECO:0000255" key="1"/>
<evidence type="ECO:0000303" key="2">
    <source>
    </source>
</evidence>
<evidence type="ECO:0000305" key="3"/>
<evidence type="ECO:0000312" key="4">
    <source>
        <dbReference type="Araport" id="AT1G61890"/>
    </source>
</evidence>
<evidence type="ECO:0000312" key="5">
    <source>
        <dbReference type="EMBL" id="AAC28507.1"/>
    </source>
</evidence>
<gene>
    <name evidence="2" type="primary">DTX37</name>
    <name evidence="4" type="ordered locus">At1g61890</name>
    <name evidence="5" type="ORF">F8K4.9</name>
</gene>
<sequence>MNSESLENLHRPLIESSKSFVDYRLETVLTDRELPYFRRIYLAMMIEMKFLFHLAAPAIFVYVINNGMSILTRIFAGHVGSFELAAASLGNSGFNMFTYGLLLGMGSAVETLCGQAHGAHRYEMLGVYLQRSTVVLILTCLPMSFLFLFSNPILTALGEPEQVATLASVFVYGMIPVIFAYAVNFPIQKFLQSQSIVTPSAYISAATLVIHLILSWIAVYRLGYGLLALSLIHSFSWWIIVVAQIVYIKMSPRCRRTWEGFSWKAFEGLWDFFRLSAASAVMLCLESWYSQILVLLAGLLKNPELALDSLAICMSISAISFMVSVGFNAAASVRVSNELGAGNPRAAAFSTVVTTGVSFLLSVFEAIVVLSWRHVISYAFTDSPAVAEAVADLSPFLAITIVLNGIQPVLSGVAVGCGWQAFVAYVNIGCYYVVGIPVGFVLGFTYDMGAKGIWTGMIGGTLMQTIILVIVTLRTDWDKEVEKASSRLDQWEESREPLLKQ</sequence>
<feature type="chain" id="PRO_0000434078" description="Protein DETOXIFICATION 37">
    <location>
        <begin position="1"/>
        <end position="501"/>
    </location>
</feature>
<feature type="transmembrane region" description="Helical" evidence="1">
    <location>
        <begin position="44"/>
        <end position="64"/>
    </location>
</feature>
<feature type="transmembrane region" description="Helical" evidence="1">
    <location>
        <begin position="84"/>
        <end position="104"/>
    </location>
</feature>
<feature type="transmembrane region" description="Helical" evidence="1">
    <location>
        <begin position="134"/>
        <end position="154"/>
    </location>
</feature>
<feature type="transmembrane region" description="Helical" evidence="1">
    <location>
        <begin position="163"/>
        <end position="183"/>
    </location>
</feature>
<feature type="transmembrane region" description="Helical" evidence="1">
    <location>
        <begin position="200"/>
        <end position="220"/>
    </location>
</feature>
<feature type="transmembrane region" description="Helical" evidence="1">
    <location>
        <begin position="222"/>
        <end position="242"/>
    </location>
</feature>
<feature type="transmembrane region" description="Helical" evidence="1">
    <location>
        <begin position="280"/>
        <end position="300"/>
    </location>
</feature>
<feature type="transmembrane region" description="Helical" evidence="1">
    <location>
        <begin position="310"/>
        <end position="330"/>
    </location>
</feature>
<feature type="transmembrane region" description="Helical" evidence="1">
    <location>
        <begin position="352"/>
        <end position="372"/>
    </location>
</feature>
<feature type="transmembrane region" description="Helical" evidence="1">
    <location>
        <begin position="396"/>
        <end position="416"/>
    </location>
</feature>
<feature type="transmembrane region" description="Helical" evidence="1">
    <location>
        <begin position="422"/>
        <end position="442"/>
    </location>
</feature>
<feature type="transmembrane region" description="Helical" evidence="1">
    <location>
        <begin position="453"/>
        <end position="473"/>
    </location>
</feature>
<feature type="sequence conflict" description="In Ref. 3; AAK82541." evidence="3" ref="3">
    <original>I</original>
    <variation>V</variation>
    <location>
        <position position="467"/>
    </location>
</feature>
<keyword id="KW-0472">Membrane</keyword>
<keyword id="KW-1185">Reference proteome</keyword>
<keyword id="KW-0812">Transmembrane</keyword>
<keyword id="KW-1133">Transmembrane helix</keyword>
<keyword id="KW-0813">Transport</keyword>
<comment type="subcellular location">
    <subcellularLocation>
        <location evidence="1">Membrane</location>
        <topology evidence="1">Multi-pass membrane protein</topology>
    </subcellularLocation>
</comment>
<comment type="similarity">
    <text evidence="3">Belongs to the multi antimicrobial extrusion (MATE) (TC 2.A.66.1) family.</text>
</comment>
<protein>
    <recommendedName>
        <fullName evidence="2">Protein DETOXIFICATION 37</fullName>
        <shortName evidence="2">AtDTX37</shortName>
    </recommendedName>
    <alternativeName>
        <fullName evidence="3">Multidrug and toxic compound extrusion protein 37</fullName>
        <shortName evidence="3">MATE protein 37</shortName>
    </alternativeName>
</protein>
<proteinExistence type="evidence at transcript level"/>
<name>DTX37_ARATH</name>
<organism>
    <name type="scientific">Arabidopsis thaliana</name>
    <name type="common">Mouse-ear cress</name>
    <dbReference type="NCBI Taxonomy" id="3702"/>
    <lineage>
        <taxon>Eukaryota</taxon>
        <taxon>Viridiplantae</taxon>
        <taxon>Streptophyta</taxon>
        <taxon>Embryophyta</taxon>
        <taxon>Tracheophyta</taxon>
        <taxon>Spermatophyta</taxon>
        <taxon>Magnoliopsida</taxon>
        <taxon>eudicotyledons</taxon>
        <taxon>Gunneridae</taxon>
        <taxon>Pentapetalae</taxon>
        <taxon>rosids</taxon>
        <taxon>malvids</taxon>
        <taxon>Brassicales</taxon>
        <taxon>Brassicaceae</taxon>
        <taxon>Camelineae</taxon>
        <taxon>Arabidopsis</taxon>
    </lineage>
</organism>